<organism>
    <name type="scientific">Margaritifera margaritifera</name>
    <name type="common">Freshwater pearl mussel</name>
    <dbReference type="NCBI Taxonomy" id="102329"/>
    <lineage>
        <taxon>Eukaryota</taxon>
        <taxon>Metazoa</taxon>
        <taxon>Spiralia</taxon>
        <taxon>Lophotrochozoa</taxon>
        <taxon>Mollusca</taxon>
        <taxon>Bivalvia</taxon>
        <taxon>Autobranchia</taxon>
        <taxon>Pteriomorphia</taxon>
        <taxon>Pterioida</taxon>
        <taxon>Pterioidea</taxon>
        <taxon>Pteriidae</taxon>
        <taxon>Pinctada</taxon>
    </lineage>
</organism>
<sequence>MKNAVLVFLLLSVFALSVNAYGYGCGWYGCPYGSKCICPYYGKCYCVPVYGKNCYIYGCPYPKVCVYGVCKWRYKY</sequence>
<dbReference type="EMBL" id="HE610396">
    <property type="protein sequence ID" value="CCE46170.1"/>
    <property type="molecule type" value="mRNA"/>
</dbReference>
<dbReference type="GO" id="GO:0005576">
    <property type="term" value="C:extracellular region"/>
    <property type="evidence" value="ECO:0007669"/>
    <property type="project" value="UniProtKB-SubCell"/>
</dbReference>
<comment type="subcellular location">
    <subcellularLocation>
        <location evidence="2">Secreted</location>
    </subcellularLocation>
</comment>
<comment type="tissue specificity">
    <text evidence="2">Prismatic layer of shell (at protein level). Expressed primarily in the mantle with equal levels in the mantle edge and the mantle pallium.</text>
</comment>
<evidence type="ECO:0000255" key="1"/>
<evidence type="ECO:0000269" key="2">
    <source>
    </source>
</evidence>
<evidence type="ECO:0000305" key="3"/>
<keyword id="KW-0903">Direct protein sequencing</keyword>
<keyword id="KW-0964">Secreted</keyword>
<keyword id="KW-0732">Signal</keyword>
<proteinExistence type="evidence at protein level"/>
<name>USP4_PINMG</name>
<reference evidence="3" key="1">
    <citation type="journal article" date="2010" name="BMC Genomics">
        <title>Transcriptome and proteome analysis of Pinctada margaritifera calcifying mantle and shell: focus on biomineralization.</title>
        <authorList>
            <person name="Joubert C."/>
            <person name="Piquemal D."/>
            <person name="Marie B."/>
            <person name="Manchon L."/>
            <person name="Pierrat F."/>
            <person name="Zanella-Cleon I."/>
            <person name="Cochennec-Laureau N."/>
            <person name="Gueguen Y."/>
            <person name="Montagnani C."/>
        </authorList>
    </citation>
    <scope>NUCLEOTIDE SEQUENCE [MRNA]</scope>
    <scope>IDENTIFICATION</scope>
    <source>
        <tissue>Mantle</tissue>
    </source>
</reference>
<reference key="2">
    <citation type="journal article" date="2012" name="Proc. Natl. Acad. Sci. U.S.A.">
        <title>Different secretory repertoires control the biomineralization processes of prism and nacre deposition of the pearl oyster shell.</title>
        <authorList>
            <person name="Marie B."/>
            <person name="Joubert C."/>
            <person name="Tayale A."/>
            <person name="Zanella-Cleon I."/>
            <person name="Belliard C."/>
            <person name="Piquemal D."/>
            <person name="Cochennec-Laureau N."/>
            <person name="Marin F."/>
            <person name="Gueguen Y."/>
            <person name="Montagnani C."/>
        </authorList>
    </citation>
    <scope>PROTEIN SEQUENCE OF 53-63</scope>
    <scope>SUBCELLULAR LOCATION</scope>
    <scope>TISSUE SPECIFICITY</scope>
    <source>
        <tissue>Shell</tissue>
    </source>
</reference>
<protein>
    <recommendedName>
        <fullName>Uncharacterized shell protein 4</fullName>
    </recommendedName>
    <alternativeName>
        <fullName>Prism uncharacterized shell protein 18</fullName>
        <shortName>PUSP18</shortName>
    </alternativeName>
</protein>
<accession>H2A0M9</accession>
<feature type="signal peptide" evidence="1">
    <location>
        <begin position="1"/>
        <end position="20"/>
    </location>
</feature>
<feature type="chain" id="PRO_0000417924" description="Uncharacterized shell protein 4" evidence="1">
    <location>
        <begin position="21"/>
        <end position="76"/>
    </location>
</feature>